<evidence type="ECO:0000255" key="1">
    <source>
        <dbReference type="HAMAP-Rule" id="MF_00409"/>
    </source>
</evidence>
<name>LPXK_SALTY</name>
<sequence length="325" mass="34995">MIARIWSGESPLWRLLLPLSWLYGLVSGAIRLSYKLGFKRAWRAPVPVVVVGNLTAGGNGKTPVVIWLVEKLQQRGVRVGVVSRGYGGKAAAYPLLLTPETTTAEAGDEPVLIYQRTGAPVAVAPERAAAVKAILAAHNVQIIITDDGLQHYRLARDIEIVVIDGVRRFGNGWWLPAGPMRERASRLKTVDAAIVNGGVARAGEIPMQLAPGLAVNLRTGARCDVAQLSNIVAMAGIGHPPRFFATLEACGAHPQKCVPLADHQTLAPADVQALVGEGQTLVMTEKDAVKCRAFAEDNWWFLPVDARLSGEQPDKLLQHITSLVR</sequence>
<comment type="function">
    <text evidence="1">Transfers the gamma-phosphate of ATP to the 4'-position of a tetraacyldisaccharide 1-phosphate intermediate (termed DS-1-P) to form tetraacyldisaccharide 1,4'-bis-phosphate (lipid IVA).</text>
</comment>
<comment type="catalytic activity">
    <reaction evidence="1">
        <text>a lipid A disaccharide + ATP = a lipid IVA + ADP + H(+)</text>
        <dbReference type="Rhea" id="RHEA:67840"/>
        <dbReference type="ChEBI" id="CHEBI:15378"/>
        <dbReference type="ChEBI" id="CHEBI:30616"/>
        <dbReference type="ChEBI" id="CHEBI:176343"/>
        <dbReference type="ChEBI" id="CHEBI:176425"/>
        <dbReference type="ChEBI" id="CHEBI:456216"/>
        <dbReference type="EC" id="2.7.1.130"/>
    </reaction>
</comment>
<comment type="pathway">
    <text evidence="1">Glycolipid biosynthesis; lipid IV(A) biosynthesis; lipid IV(A) from (3R)-3-hydroxytetradecanoyl-[acyl-carrier-protein] and UDP-N-acetyl-alpha-D-glucosamine: step 6/6.</text>
</comment>
<comment type="similarity">
    <text evidence="1">Belongs to the LpxK family.</text>
</comment>
<feature type="chain" id="PRO_0000190950" description="Tetraacyldisaccharide 4'-kinase">
    <location>
        <begin position="1"/>
        <end position="325"/>
    </location>
</feature>
<feature type="binding site" evidence="1">
    <location>
        <begin position="55"/>
        <end position="62"/>
    </location>
    <ligand>
        <name>ATP</name>
        <dbReference type="ChEBI" id="CHEBI:30616"/>
    </ligand>
</feature>
<protein>
    <recommendedName>
        <fullName evidence="1">Tetraacyldisaccharide 4'-kinase</fullName>
        <ecNumber evidence="1">2.7.1.130</ecNumber>
    </recommendedName>
    <alternativeName>
        <fullName evidence="1">Lipid A 4'-kinase</fullName>
    </alternativeName>
</protein>
<accession>Q8ZQC2</accession>
<gene>
    <name evidence="1" type="primary">lpxK</name>
    <name type="ordered locus">STM0985</name>
</gene>
<reference key="1">
    <citation type="journal article" date="2001" name="Nature">
        <title>Complete genome sequence of Salmonella enterica serovar Typhimurium LT2.</title>
        <authorList>
            <person name="McClelland M."/>
            <person name="Sanderson K.E."/>
            <person name="Spieth J."/>
            <person name="Clifton S.W."/>
            <person name="Latreille P."/>
            <person name="Courtney L."/>
            <person name="Porwollik S."/>
            <person name="Ali J."/>
            <person name="Dante M."/>
            <person name="Du F."/>
            <person name="Hou S."/>
            <person name="Layman D."/>
            <person name="Leonard S."/>
            <person name="Nguyen C."/>
            <person name="Scott K."/>
            <person name="Holmes A."/>
            <person name="Grewal N."/>
            <person name="Mulvaney E."/>
            <person name="Ryan E."/>
            <person name="Sun H."/>
            <person name="Florea L."/>
            <person name="Miller W."/>
            <person name="Stoneking T."/>
            <person name="Nhan M."/>
            <person name="Waterston R."/>
            <person name="Wilson R.K."/>
        </authorList>
    </citation>
    <scope>NUCLEOTIDE SEQUENCE [LARGE SCALE GENOMIC DNA]</scope>
    <source>
        <strain>LT2 / SGSC1412 / ATCC 700720</strain>
    </source>
</reference>
<dbReference type="EC" id="2.7.1.130" evidence="1"/>
<dbReference type="EMBL" id="AE006468">
    <property type="protein sequence ID" value="AAL19919.1"/>
    <property type="molecule type" value="Genomic_DNA"/>
</dbReference>
<dbReference type="RefSeq" id="NP_459960.1">
    <property type="nucleotide sequence ID" value="NC_003197.2"/>
</dbReference>
<dbReference type="RefSeq" id="WP_000561681.1">
    <property type="nucleotide sequence ID" value="NC_003197.2"/>
</dbReference>
<dbReference type="SMR" id="Q8ZQC2"/>
<dbReference type="STRING" id="99287.STM0985"/>
<dbReference type="PaxDb" id="99287-STM0985"/>
<dbReference type="GeneID" id="1252503"/>
<dbReference type="KEGG" id="stm:STM0985"/>
<dbReference type="PATRIC" id="fig|99287.12.peg.1038"/>
<dbReference type="HOGENOM" id="CLU_038816_2_0_6"/>
<dbReference type="OMA" id="RAFPDHH"/>
<dbReference type="PhylomeDB" id="Q8ZQC2"/>
<dbReference type="BioCyc" id="SENT99287:STM0985-MONOMER"/>
<dbReference type="UniPathway" id="UPA00359">
    <property type="reaction ID" value="UER00482"/>
</dbReference>
<dbReference type="Proteomes" id="UP000001014">
    <property type="component" value="Chromosome"/>
</dbReference>
<dbReference type="GO" id="GO:0005886">
    <property type="term" value="C:plasma membrane"/>
    <property type="evidence" value="ECO:0000318"/>
    <property type="project" value="GO_Central"/>
</dbReference>
<dbReference type="GO" id="GO:0005524">
    <property type="term" value="F:ATP binding"/>
    <property type="evidence" value="ECO:0007669"/>
    <property type="project" value="UniProtKB-UniRule"/>
</dbReference>
<dbReference type="GO" id="GO:0009029">
    <property type="term" value="F:tetraacyldisaccharide 4'-kinase activity"/>
    <property type="evidence" value="ECO:0000318"/>
    <property type="project" value="GO_Central"/>
</dbReference>
<dbReference type="GO" id="GO:0009245">
    <property type="term" value="P:lipid A biosynthetic process"/>
    <property type="evidence" value="ECO:0000318"/>
    <property type="project" value="GO_Central"/>
</dbReference>
<dbReference type="GO" id="GO:0009244">
    <property type="term" value="P:lipopolysaccharide core region biosynthetic process"/>
    <property type="evidence" value="ECO:0000318"/>
    <property type="project" value="GO_Central"/>
</dbReference>
<dbReference type="HAMAP" id="MF_00409">
    <property type="entry name" value="LpxK"/>
    <property type="match status" value="1"/>
</dbReference>
<dbReference type="InterPro" id="IPR003758">
    <property type="entry name" value="LpxK"/>
</dbReference>
<dbReference type="InterPro" id="IPR027417">
    <property type="entry name" value="P-loop_NTPase"/>
</dbReference>
<dbReference type="NCBIfam" id="TIGR00682">
    <property type="entry name" value="lpxK"/>
    <property type="match status" value="1"/>
</dbReference>
<dbReference type="PANTHER" id="PTHR42724">
    <property type="entry name" value="TETRAACYLDISACCHARIDE 4'-KINASE"/>
    <property type="match status" value="1"/>
</dbReference>
<dbReference type="PANTHER" id="PTHR42724:SF1">
    <property type="entry name" value="TETRAACYLDISACCHARIDE 4'-KINASE, MITOCHONDRIAL-RELATED"/>
    <property type="match status" value="1"/>
</dbReference>
<dbReference type="Pfam" id="PF02606">
    <property type="entry name" value="LpxK"/>
    <property type="match status" value="1"/>
</dbReference>
<dbReference type="SUPFAM" id="SSF52540">
    <property type="entry name" value="P-loop containing nucleoside triphosphate hydrolases"/>
    <property type="match status" value="1"/>
</dbReference>
<organism>
    <name type="scientific">Salmonella typhimurium (strain LT2 / SGSC1412 / ATCC 700720)</name>
    <dbReference type="NCBI Taxonomy" id="99287"/>
    <lineage>
        <taxon>Bacteria</taxon>
        <taxon>Pseudomonadati</taxon>
        <taxon>Pseudomonadota</taxon>
        <taxon>Gammaproteobacteria</taxon>
        <taxon>Enterobacterales</taxon>
        <taxon>Enterobacteriaceae</taxon>
        <taxon>Salmonella</taxon>
    </lineage>
</organism>
<keyword id="KW-0067">ATP-binding</keyword>
<keyword id="KW-0418">Kinase</keyword>
<keyword id="KW-0441">Lipid A biosynthesis</keyword>
<keyword id="KW-0444">Lipid biosynthesis</keyword>
<keyword id="KW-0443">Lipid metabolism</keyword>
<keyword id="KW-0547">Nucleotide-binding</keyword>
<keyword id="KW-1185">Reference proteome</keyword>
<keyword id="KW-0808">Transferase</keyword>
<proteinExistence type="inferred from homology"/>